<dbReference type="EMBL" id="EU792881">
    <property type="protein sequence ID" value="ACH56827.1"/>
    <property type="molecule type" value="mRNA"/>
</dbReference>
<dbReference type="EMBL" id="FJ028657">
    <property type="protein sequence ID" value="ACN18277.1"/>
    <property type="molecule type" value="mRNA"/>
</dbReference>
<dbReference type="EMBL" id="DAAA02043522">
    <property type="status" value="NOT_ANNOTATED_CDS"/>
    <property type="molecule type" value="Genomic_DNA"/>
</dbReference>
<dbReference type="EMBL" id="DAAA02043523">
    <property type="status" value="NOT_ANNOTATED_CDS"/>
    <property type="molecule type" value="Genomic_DNA"/>
</dbReference>
<dbReference type="RefSeq" id="NP_001177227.1">
    <property type="nucleotide sequence ID" value="NM_001190298.1"/>
</dbReference>
<dbReference type="PDB" id="4IIQ">
    <property type="method" value="X-ray"/>
    <property type="resolution" value="2.86 A"/>
    <property type="chains" value="C=19-295"/>
</dbReference>
<dbReference type="PDB" id="4L8S">
    <property type="method" value="X-ray"/>
    <property type="resolution" value="2.90 A"/>
    <property type="chains" value="C=19-295"/>
</dbReference>
<dbReference type="PDB" id="4L9L">
    <property type="method" value="X-ray"/>
    <property type="resolution" value="3.40 A"/>
    <property type="chains" value="C=19-295"/>
</dbReference>
<dbReference type="PDB" id="4LCC">
    <property type="method" value="X-ray"/>
    <property type="resolution" value="3.26 A"/>
    <property type="chains" value="C=19-295"/>
</dbReference>
<dbReference type="PDB" id="7RNO">
    <property type="method" value="NMR"/>
    <property type="chains" value="A=201-288"/>
</dbReference>
<dbReference type="PDBsum" id="4IIQ"/>
<dbReference type="PDBsum" id="4L8S"/>
<dbReference type="PDBsum" id="4L9L"/>
<dbReference type="PDBsum" id="4LCC"/>
<dbReference type="PDBsum" id="7RNO"/>
<dbReference type="SMR" id="C1ITJ8"/>
<dbReference type="FunCoup" id="C1ITJ8">
    <property type="interactions" value="71"/>
</dbReference>
<dbReference type="STRING" id="9913.ENSBTAP00000062146"/>
<dbReference type="GlyCosmos" id="C1ITJ8">
    <property type="glycosylation" value="1 site, No reported glycans"/>
</dbReference>
<dbReference type="GlyGen" id="C1ITJ8">
    <property type="glycosylation" value="1 site"/>
</dbReference>
<dbReference type="PaxDb" id="9913-ENSBTAP00000013095"/>
<dbReference type="GeneID" id="506206"/>
<dbReference type="KEGG" id="bta:506206"/>
<dbReference type="CTD" id="3140"/>
<dbReference type="VEuPathDB" id="HostDB:ENSBTAG00000009924"/>
<dbReference type="eggNOG" id="ENOG502RQEK">
    <property type="taxonomic scope" value="Eukaryota"/>
</dbReference>
<dbReference type="HOGENOM" id="CLU_047501_0_1_1"/>
<dbReference type="InParanoid" id="C1ITJ8"/>
<dbReference type="OMA" id="PEISMMW"/>
<dbReference type="OrthoDB" id="8936120at2759"/>
<dbReference type="TreeFam" id="TF336617"/>
<dbReference type="EvolutionaryTrace" id="C1ITJ8"/>
<dbReference type="Proteomes" id="UP000009136">
    <property type="component" value="Chromosome 16"/>
</dbReference>
<dbReference type="Bgee" id="ENSBTAG00000009924">
    <property type="expression patterns" value="Expressed in monocyte and 106 other cell types or tissues"/>
</dbReference>
<dbReference type="GO" id="GO:0031901">
    <property type="term" value="C:early endosome membrane"/>
    <property type="evidence" value="ECO:0000250"/>
    <property type="project" value="UniProtKB"/>
</dbReference>
<dbReference type="GO" id="GO:0005789">
    <property type="term" value="C:endoplasmic reticulum membrane"/>
    <property type="evidence" value="ECO:0000250"/>
    <property type="project" value="UniProtKB"/>
</dbReference>
<dbReference type="GO" id="GO:0009897">
    <property type="term" value="C:external side of plasma membrane"/>
    <property type="evidence" value="ECO:0000318"/>
    <property type="project" value="GO_Central"/>
</dbReference>
<dbReference type="GO" id="GO:0005615">
    <property type="term" value="C:extracellular space"/>
    <property type="evidence" value="ECO:0000318"/>
    <property type="project" value="GO_Central"/>
</dbReference>
<dbReference type="GO" id="GO:0000139">
    <property type="term" value="C:Golgi membrane"/>
    <property type="evidence" value="ECO:0007669"/>
    <property type="project" value="UniProtKB-SubCell"/>
</dbReference>
<dbReference type="GO" id="GO:0031902">
    <property type="term" value="C:late endosome membrane"/>
    <property type="evidence" value="ECO:0000250"/>
    <property type="project" value="UniProtKB"/>
</dbReference>
<dbReference type="GO" id="GO:0042612">
    <property type="term" value="C:MHC class I protein complex"/>
    <property type="evidence" value="ECO:0007669"/>
    <property type="project" value="UniProtKB-KW"/>
</dbReference>
<dbReference type="GO" id="GO:0005886">
    <property type="term" value="C:plasma membrane"/>
    <property type="evidence" value="ECO:0000250"/>
    <property type="project" value="UniProtKB"/>
</dbReference>
<dbReference type="GO" id="GO:0030881">
    <property type="term" value="F:beta-2-microglobulin binding"/>
    <property type="evidence" value="ECO:0000250"/>
    <property type="project" value="UniProtKB"/>
</dbReference>
<dbReference type="GO" id="GO:0042608">
    <property type="term" value="F:T cell receptor binding"/>
    <property type="evidence" value="ECO:0000250"/>
    <property type="project" value="UniProtKB"/>
</dbReference>
<dbReference type="GO" id="GO:0002474">
    <property type="term" value="P:antigen processing and presentation of peptide antigen via MHC class I"/>
    <property type="evidence" value="ECO:0007669"/>
    <property type="project" value="UniProtKB-KW"/>
</dbReference>
<dbReference type="GO" id="GO:0050829">
    <property type="term" value="P:defense response to Gram-negative bacterium"/>
    <property type="evidence" value="ECO:0000250"/>
    <property type="project" value="UniProtKB"/>
</dbReference>
<dbReference type="GO" id="GO:0050830">
    <property type="term" value="P:defense response to Gram-positive bacterium"/>
    <property type="evidence" value="ECO:0000250"/>
    <property type="project" value="UniProtKB"/>
</dbReference>
<dbReference type="GO" id="GO:0006955">
    <property type="term" value="P:immune response"/>
    <property type="evidence" value="ECO:0000318"/>
    <property type="project" value="GO_Central"/>
</dbReference>
<dbReference type="GO" id="GO:0045087">
    <property type="term" value="P:innate immune response"/>
    <property type="evidence" value="ECO:0007669"/>
    <property type="project" value="UniProtKB-KW"/>
</dbReference>
<dbReference type="GO" id="GO:0002854">
    <property type="term" value="P:positive regulation of T cell mediated cytotoxicity directed against tumor cell target"/>
    <property type="evidence" value="ECO:0000250"/>
    <property type="project" value="UniProtKB"/>
</dbReference>
<dbReference type="GO" id="GO:0033077">
    <property type="term" value="P:T cell differentiation in thymus"/>
    <property type="evidence" value="ECO:0000250"/>
    <property type="project" value="UniProtKB"/>
</dbReference>
<dbReference type="CDD" id="cd07698">
    <property type="entry name" value="IgC1_MHC_I_alpha3"/>
    <property type="match status" value="1"/>
</dbReference>
<dbReference type="FunFam" id="3.30.500.10:FF:000001">
    <property type="entry name" value="H-2 class I histocompatibility antigen, alpha chain"/>
    <property type="match status" value="1"/>
</dbReference>
<dbReference type="FunFam" id="2.60.40.10:FF:000204">
    <property type="entry name" value="Major histocompatibility complex, class I-related protein"/>
    <property type="match status" value="1"/>
</dbReference>
<dbReference type="Gene3D" id="2.60.40.10">
    <property type="entry name" value="Immunoglobulins"/>
    <property type="match status" value="1"/>
</dbReference>
<dbReference type="Gene3D" id="3.30.500.10">
    <property type="entry name" value="MHC class I-like antigen recognition-like"/>
    <property type="match status" value="1"/>
</dbReference>
<dbReference type="InterPro" id="IPR007110">
    <property type="entry name" value="Ig-like_dom"/>
</dbReference>
<dbReference type="InterPro" id="IPR036179">
    <property type="entry name" value="Ig-like_dom_sf"/>
</dbReference>
<dbReference type="InterPro" id="IPR013783">
    <property type="entry name" value="Ig-like_fold"/>
</dbReference>
<dbReference type="InterPro" id="IPR003006">
    <property type="entry name" value="Ig/MHC_CS"/>
</dbReference>
<dbReference type="InterPro" id="IPR003597">
    <property type="entry name" value="Ig_C1-set"/>
</dbReference>
<dbReference type="InterPro" id="IPR050208">
    <property type="entry name" value="MHC_class-I_related"/>
</dbReference>
<dbReference type="InterPro" id="IPR011161">
    <property type="entry name" value="MHC_I-like_Ag-recog"/>
</dbReference>
<dbReference type="InterPro" id="IPR037055">
    <property type="entry name" value="MHC_I-like_Ag-recog_sf"/>
</dbReference>
<dbReference type="InterPro" id="IPR011162">
    <property type="entry name" value="MHC_I/II-like_Ag-recog"/>
</dbReference>
<dbReference type="InterPro" id="IPR001039">
    <property type="entry name" value="MHC_I_a_a1/a2"/>
</dbReference>
<dbReference type="PANTHER" id="PTHR16675:SF242">
    <property type="entry name" value="MAJOR HISTOCOMPATIBILITY COMPLEX CLASS I-RELATED GENE PROTEIN"/>
    <property type="match status" value="1"/>
</dbReference>
<dbReference type="PANTHER" id="PTHR16675">
    <property type="entry name" value="MHC CLASS I-RELATED"/>
    <property type="match status" value="1"/>
</dbReference>
<dbReference type="Pfam" id="PF07654">
    <property type="entry name" value="C1-set"/>
    <property type="match status" value="1"/>
</dbReference>
<dbReference type="Pfam" id="PF00129">
    <property type="entry name" value="MHC_I"/>
    <property type="match status" value="1"/>
</dbReference>
<dbReference type="PRINTS" id="PR01638">
    <property type="entry name" value="MHCCLASSI"/>
</dbReference>
<dbReference type="SMART" id="SM00407">
    <property type="entry name" value="IGc1"/>
    <property type="match status" value="1"/>
</dbReference>
<dbReference type="SUPFAM" id="SSF48726">
    <property type="entry name" value="Immunoglobulin"/>
    <property type="match status" value="1"/>
</dbReference>
<dbReference type="SUPFAM" id="SSF54452">
    <property type="entry name" value="MHC antigen-recognition domain"/>
    <property type="match status" value="1"/>
</dbReference>
<dbReference type="PROSITE" id="PS50835">
    <property type="entry name" value="IG_LIKE"/>
    <property type="match status" value="1"/>
</dbReference>
<dbReference type="PROSITE" id="PS00290">
    <property type="entry name" value="IG_MHC"/>
    <property type="match status" value="1"/>
</dbReference>
<comment type="function">
    <text evidence="2">Antigen-presenting molecule specialized in displaying microbial pyrimidine-based metabolites to alpha-beta T cell receptors (TCR) on innate-type mucosal-associated invariant T (MAIT) cells. In complex with B2M preferentially presents riboflavin-derived metabolites to semi-invariant TCRs on MAIT cells, guiding immune surveillance of the microbial metabolome at mucosal epithelial barriers (By similarity). Signature pyrimidine-based microbial antigens are generated via non-enzymatic condensation of metabolite intermediates of the riboflavin pathway with by-products arising from other metabolic pathways such as glycolysis. Typical potent antigenic metabolites are 5-(2-oxoethylideneamino)-6-D-ribitylaminouracil (5-OE-RU) and 5-(2-oxopropylideneamino)-6-D-ribitylaminouracil (5-OP-RU), products of condensation of 5-amino-6-D-ribityaminouracil (5-A-RU) with glyoxal or methylglyoxal by-products, respectively (By similarity). May present microbial antigens to various MAIT cell subsets, providing for unique recognition of diverse microbes, including pathogens that do not synthesize riboflavin. Upon antigen recognition, elicits rapid innate-type MAIT cell activation to eliminate pathogenic microbes by directly killing infected cells (By similarity). During T cell development, drives thymic selection and post-thymic terminal differentiation of MAIT cells in a process dependent on commensal microflora (By similarity). Acts as an immune sensor of cancer cell metabolome. May present a tumor-specific or -associated metabolite essential for cancer cell survival to a pan-cancer TCR on a non-MAIT CD8-positive T cell clone, triggering T cell-mediated killing of a wide range of cancer cell types (By similarity). May present tumor-enriched pyridoxal and pyridoxal 5'-phosphate antigens, enabling preferential recognition of cancer cells (By similarity). Presents nucleobase carbonyl adducts generated during oxidative stress. Captures M3Ade, a nucleobase adduct composed of one adenine modified by a malondialdehyde trimer, for recognition by MR1-restricted T cell clones expressing a polyclonal TCR repertoire (By similarity).</text>
</comment>
<comment type="subunit">
    <text evidence="2 6">Heterotrimer that consists of MR1, B2M and metabolite antigen (By similarity). Major classes of metabolite ligands presented by MR1 include riboflavin-related antigens, pyrimidines and ribityl lumazines, nucleobase adducts and folate derivatives. Forms reversible covalent Schiff base complexes with microbial pyrimidine-based metabolite, which serves as a molecular switch triggering complete folding, stable association with B2M and translocation of the ternary complex from endoplasmic reticulum to the plasma membrane. Alternatively, forms non-Schiff base complexes with ribityl lumazines (By similarity). On antigen-presenting cells, the ternary complex interacts with TCR on MR1-restricted T cells. Interacts with TAPBP and TAPBPL chaperones in the endoplasmic reticulum. TAPBP associated or not with MHC class I peptide loading complex binds ligand-free MR1 or MR1-B2M complex, providing for stable MR1 pools ready for metabolite antigen processing. TAPBPL interacts with MR1 in a ligand-independent way; this interaction may stabilize MR1 pool and facilitate ligand loading and dissociation (By similarity). Structurally, MR1-B2M heterodimer adopts a topology similar to classical MHC class I molecules, with alpha-1 and alpha-2 domains of MR1 forming the antigen-binding cleft composed of two alpha-helices resting on a floor of 7-stranded anti-parallel beta-pleated sheet (By similarity). MR1-B2M heterodimer (via alpha-helices) interacts with TCR (via CDR domains) (PubMed:23613577).</text>
</comment>
<comment type="subcellular location">
    <subcellularLocation>
        <location evidence="5">Cell membrane</location>
        <topology evidence="2">Single-pass type I membrane protein</topology>
    </subcellularLocation>
    <subcellularLocation>
        <location evidence="2">Endoplasmic reticulum membrane</location>
        <topology evidence="3">Single-pass type I membrane protein</topology>
    </subcellularLocation>
    <subcellularLocation>
        <location evidence="2">Golgi apparatus membrane</location>
        <topology evidence="3">Single-pass type I membrane protein</topology>
    </subcellularLocation>
    <subcellularLocation>
        <location evidence="2">Early endosome membrane</location>
        <topology evidence="3">Single-pass type I membrane protein</topology>
    </subcellularLocation>
    <subcellularLocation>
        <location evidence="2">Late endosome membrane</location>
        <topology evidence="3">Single-pass type I membrane protein</topology>
    </subcellularLocation>
    <text evidence="2">In the absence of antigen remains within the endoplasmic reticulum where it acts as a metabolite sensor. Antigen binding triggers trafficking of the ternary complex to the plasma membrane. After presentation, most of these complexes are rapidly internalized and degraded via endocytosis. A small subset recycles via endosomes back to the plasma membrane and may thus acquire and present new antigens that do not efficiently reach the endoplasmic reticulum.</text>
</comment>
<comment type="domain">
    <text evidence="2">The alpha-1 domain is a structural part of antigen-binding cleft.</text>
</comment>
<comment type="domain">
    <text evidence="2">The alpha-2 domain is a structural part of antigen-binding cleft.</text>
</comment>
<comment type="PTM">
    <text evidence="2">N-glycosylated.</text>
</comment>
<comment type="similarity">
    <text evidence="8">Belongs to the MHC class I family.</text>
</comment>
<gene>
    <name evidence="7" type="primary">MR1</name>
</gene>
<accession>C1ITJ8</accession>
<accession>F1MVL8</accession>
<proteinExistence type="evidence at protein level"/>
<protein>
    <recommendedName>
        <fullName>Major histocompatibility complex class I-related protein 1</fullName>
        <shortName>MHC class I-related protein 1</shortName>
    </recommendedName>
    <alternativeName>
        <fullName>Class I histocompatibility antigen-like protein</fullName>
    </alternativeName>
</protein>
<sequence length="336" mass="38894">MMLLLPLIIVLMMKLSDARTHSLRYFRLGISEPGYGIPEFISAGYVDSHPITMYNSVSQLKEPRALWMEENLAPDHWERYTQLLRGWQQAFKVELKQLQHHYNHSGFHTYQRMIGCELLEDGSITGFLQYAYDGQDFLIFNKDTLSWMAMDNVADIIRRVWEANRHELQYQKNWLEEECIAWLKRFLEYGKDALQRTEPPKVRVNHKETFPGITTLYCRAYGFYPPEISINWMKNGEEIFQDTDYGGILPSGDGTYQTWVSVELDPQNGDIYSCHVEHGGVHMVLQGFQESETILLVVKAVGFIVLAIALAGVGILAWRKRPRGKNKVICLSTPEH</sequence>
<name>HMR1_BOVIN</name>
<evidence type="ECO:0000250" key="1"/>
<evidence type="ECO:0000250" key="2">
    <source>
        <dbReference type="UniProtKB" id="Q95460"/>
    </source>
</evidence>
<evidence type="ECO:0000255" key="3"/>
<evidence type="ECO:0000255" key="4">
    <source>
        <dbReference type="PROSITE-ProRule" id="PRU00114"/>
    </source>
</evidence>
<evidence type="ECO:0000269" key="5">
    <source>
    </source>
</evidence>
<evidence type="ECO:0000269" key="6">
    <source>
    </source>
</evidence>
<evidence type="ECO:0000303" key="7">
    <source>
    </source>
</evidence>
<evidence type="ECO:0000305" key="8"/>
<evidence type="ECO:0007744" key="9">
    <source>
        <dbReference type="PDB" id="4IIQ"/>
    </source>
</evidence>
<evidence type="ECO:0007829" key="10">
    <source>
        <dbReference type="PDB" id="4IIQ"/>
    </source>
</evidence>
<evidence type="ECO:0007829" key="11">
    <source>
        <dbReference type="PDB" id="4L8S"/>
    </source>
</evidence>
<reference key="1">
    <citation type="journal article" date="2009" name="Proc. Natl. Acad. Sci. U.S.A.">
        <title>MR1 antigen presentation to mucosal-associated invariant T cells was highly conserved in evolution.</title>
        <authorList>
            <person name="Huang S."/>
            <person name="Martin E."/>
            <person name="Kim S."/>
            <person name="Yu L."/>
            <person name="Soudais C."/>
            <person name="Fremont D.H."/>
            <person name="Lantz O."/>
            <person name="Hansen T.H."/>
        </authorList>
    </citation>
    <scope>NUCLEOTIDE SEQUENCE [MRNA]</scope>
    <scope>SUBCELLULAR LOCATION</scope>
</reference>
<reference key="2">
    <citation type="submission" date="2008-08" db="EMBL/GenBank/DDBJ databases">
        <title>Ruminant MR1 and MAIT cells.</title>
        <authorList>
            <person name="Van Rhijn I."/>
        </authorList>
    </citation>
    <scope>NUCLEOTIDE SEQUENCE [MRNA]</scope>
</reference>
<reference key="3">
    <citation type="journal article" date="2009" name="Genome Biol.">
        <title>A whole-genome assembly of the domestic cow, Bos taurus.</title>
        <authorList>
            <person name="Zimin A.V."/>
            <person name="Delcher A.L."/>
            <person name="Florea L."/>
            <person name="Kelley D.R."/>
            <person name="Schatz M.C."/>
            <person name="Puiu D."/>
            <person name="Hanrahan F."/>
            <person name="Pertea G."/>
            <person name="Van Tassell C.P."/>
            <person name="Sonstegard T.S."/>
            <person name="Marcais G."/>
            <person name="Roberts M."/>
            <person name="Subramanian P."/>
            <person name="Yorke J.A."/>
            <person name="Salzberg S.L."/>
        </authorList>
    </citation>
    <scope>NUCLEOTIDE SEQUENCE [LARGE SCALE GENOMIC DNA]</scope>
    <source>
        <strain>Hereford</strain>
    </source>
</reference>
<reference key="4">
    <citation type="journal article" date="2013" name="Proc. Natl. Acad. Sci. U.S.A.">
        <title>The molecular basis for Mucosal-Associated Invariant T cell recognition of MR1 proteins.</title>
        <authorList>
            <person name="Lopez-Sagaseta J."/>
            <person name="Dulberger C.L."/>
            <person name="Crooks J.E."/>
            <person name="Parks C.D."/>
            <person name="Luoma A.M."/>
            <person name="McFedries A."/>
            <person name="Van Rhijn I."/>
            <person name="Saghatelian A."/>
            <person name="Adams E.J."/>
        </authorList>
    </citation>
    <scope>X-RAY CRYSTALLOGRAPHY (2.86 ANGSTROMS) OF 19-295 IN COMPLEX WITH B2M AND HUMAN T-CELL RECEPTOR</scope>
    <scope>DISULFIDE BONDS</scope>
</reference>
<keyword id="KW-0002">3D-structure</keyword>
<keyword id="KW-1003">Cell membrane</keyword>
<keyword id="KW-1015">Disulfide bond</keyword>
<keyword id="KW-0256">Endoplasmic reticulum</keyword>
<keyword id="KW-0967">Endosome</keyword>
<keyword id="KW-0325">Glycoprotein</keyword>
<keyword id="KW-0333">Golgi apparatus</keyword>
<keyword id="KW-0391">Immunity</keyword>
<keyword id="KW-0393">Immunoglobulin domain</keyword>
<keyword id="KW-0399">Innate immunity</keyword>
<keyword id="KW-0472">Membrane</keyword>
<keyword id="KW-0490">MHC I</keyword>
<keyword id="KW-1185">Reference proteome</keyword>
<keyword id="KW-0732">Signal</keyword>
<keyword id="KW-0812">Transmembrane</keyword>
<keyword id="KW-1133">Transmembrane helix</keyword>
<feature type="signal peptide" evidence="1">
    <location>
        <begin position="1"/>
        <end position="18"/>
    </location>
</feature>
<feature type="chain" id="PRO_0000425531" description="Major histocompatibility complex class I-related protein 1">
    <location>
        <begin position="19"/>
        <end position="336"/>
    </location>
</feature>
<feature type="topological domain" description="Extracellular" evidence="3">
    <location>
        <begin position="19"/>
        <end position="298"/>
    </location>
</feature>
<feature type="transmembrane region" description="Helical" evidence="3">
    <location>
        <begin position="299"/>
        <end position="319"/>
    </location>
</feature>
<feature type="topological domain" description="Cytoplasmic" evidence="3">
    <location>
        <begin position="320"/>
        <end position="336"/>
    </location>
</feature>
<feature type="domain" description="Ig-like C1-type" evidence="4">
    <location>
        <begin position="200"/>
        <end position="295"/>
    </location>
</feature>
<feature type="region of interest" description="Antigen-binding cleft" evidence="2">
    <location>
        <begin position="19"/>
        <end position="197"/>
    </location>
</feature>
<feature type="region of interest" description="Alpha-1" evidence="3">
    <location>
        <begin position="19"/>
        <end position="105"/>
    </location>
</feature>
<feature type="region of interest" description="Alpha-2" evidence="3">
    <location>
        <begin position="106"/>
        <end position="197"/>
    </location>
</feature>
<feature type="region of interest" description="Alpha-3" evidence="3">
    <location>
        <begin position="198"/>
        <end position="289"/>
    </location>
</feature>
<feature type="region of interest" description="Connecting peptide" evidence="3">
    <location>
        <begin position="290"/>
        <end position="298"/>
    </location>
</feature>
<feature type="binding site" evidence="2">
    <location>
        <position position="25"/>
    </location>
    <ligand>
        <name>8-(9H-purin-6-yl)-2-oxa-8-azabicyclo[3.3.1]nona-3,6-diene-4,6-dicarbaldehyde</name>
        <dbReference type="ChEBI" id="CHEBI:233180"/>
    </ligand>
</feature>
<feature type="binding site" evidence="2">
    <location>
        <position position="27"/>
    </location>
    <ligand>
        <name>5-(2-oxoethylideneamino)-6-(D-ribitylamino)uracil</name>
        <dbReference type="ChEBI" id="CHEBI:78397"/>
        <note>pathogen-derived metabolite antigen</note>
    </ligand>
</feature>
<feature type="binding site" evidence="2">
    <location>
        <position position="27"/>
    </location>
    <ligand>
        <name>5-(2-oxopropylideneamino)-6-(D-ribitylamino)uracil</name>
        <dbReference type="ChEBI" id="CHEBI:78398"/>
        <note>pathogen-derived metabolite antigen</note>
    </ligand>
</feature>
<feature type="binding site" evidence="2">
    <location>
        <position position="27"/>
    </location>
    <ligand>
        <name>7-hydroxy-6-methyl-8-(1-D-ribityl)lumazine</name>
        <dbReference type="ChEBI" id="CHEBI:233481"/>
        <note>pathogen-derived metabolite antigen</note>
    </ligand>
</feature>
<feature type="binding site" evidence="2">
    <location>
        <position position="27"/>
    </location>
    <ligand>
        <name>8-(9H-purin-6-yl)-2-oxa-8-azabicyclo[3.3.1]nona-3,6-diene-4,6-dicarbaldehyde</name>
        <dbReference type="ChEBI" id="CHEBI:233180"/>
    </ligand>
</feature>
<feature type="binding site" evidence="2">
    <location>
        <position position="42"/>
    </location>
    <ligand>
        <name>5-(2-oxoethylideneamino)-6-(D-ribitylamino)uracil</name>
        <dbReference type="ChEBI" id="CHEBI:78397"/>
        <note>pathogen-derived metabolite antigen</note>
    </ligand>
</feature>
<feature type="binding site" evidence="2">
    <location>
        <position position="42"/>
    </location>
    <ligand>
        <name>5-(2-oxopropylideneamino)-6-(D-ribitylamino)uracil</name>
        <dbReference type="ChEBI" id="CHEBI:78398"/>
        <note>pathogen-derived metabolite antigen</note>
    </ligand>
</feature>
<feature type="binding site" evidence="2">
    <location>
        <position position="42"/>
    </location>
    <ligand>
        <name>7-hydroxy-6-methyl-8-(1-D-ribityl)lumazine</name>
        <dbReference type="ChEBI" id="CHEBI:233481"/>
        <note>pathogen-derived metabolite antigen</note>
    </ligand>
</feature>
<feature type="binding site" description="covalent" evidence="2">
    <location>
        <position position="61"/>
    </location>
    <ligand>
        <name>2-amino-4-oxopteridine-6-carbaldehyde</name>
        <dbReference type="ChEBI" id="CHEBI:70981"/>
    </ligand>
</feature>
<feature type="binding site" description="covalent" evidence="2">
    <location>
        <position position="61"/>
    </location>
    <ligand>
        <name>5-(2-oxoethylideneamino)-6-(D-ribitylamino)uracil</name>
        <dbReference type="ChEBI" id="CHEBI:78397"/>
        <note>pathogen-derived metabolite antigen</note>
    </ligand>
</feature>
<feature type="binding site" description="covalent" evidence="2">
    <location>
        <position position="61"/>
    </location>
    <ligand>
        <name>5-(2-oxopropylideneamino)-6-(D-ribitylamino)uracil</name>
        <dbReference type="ChEBI" id="CHEBI:78398"/>
        <note>pathogen-derived metabolite antigen</note>
    </ligand>
</feature>
<feature type="binding site" evidence="2">
    <location>
        <position position="61"/>
    </location>
    <ligand>
        <name>7-hydroxy-6-methyl-8-(1-D-ribityl)lumazine</name>
        <dbReference type="ChEBI" id="CHEBI:233481"/>
        <note>pathogen-derived metabolite antigen</note>
    </ligand>
</feature>
<feature type="binding site" description="covalent" evidence="2">
    <location>
        <position position="61"/>
    </location>
    <ligand>
        <name>8-(9H-purin-6-yl)-2-oxa-8-azabicyclo[3.3.1]nona-3,6-diene-4,6-dicarbaldehyde</name>
        <dbReference type="ChEBI" id="CHEBI:233180"/>
    </ligand>
</feature>
<feature type="binding site" description="covalent" evidence="2">
    <location>
        <position position="61"/>
    </location>
    <ligand>
        <name>pyridoxal</name>
        <dbReference type="ChEBI" id="CHEBI:17310"/>
    </ligand>
</feature>
<feature type="binding site" evidence="2">
    <location>
        <position position="76"/>
    </location>
    <ligand>
        <name>8-(9H-purin-6-yl)-2-oxa-8-azabicyclo[3.3.1]nona-3,6-diene-4,6-dicarbaldehyde</name>
        <dbReference type="ChEBI" id="CHEBI:233180"/>
    </ligand>
</feature>
<feature type="binding site" evidence="2">
    <location>
        <position position="112"/>
    </location>
    <ligand>
        <name>5-(2-oxoethylideneamino)-6-(D-ribitylamino)uracil</name>
        <dbReference type="ChEBI" id="CHEBI:78397"/>
        <note>pathogen-derived metabolite antigen</note>
    </ligand>
</feature>
<feature type="binding site" evidence="2">
    <location>
        <position position="112"/>
    </location>
    <ligand>
        <name>5-(2-oxopropylideneamino)-6-(D-ribitylamino)uracil</name>
        <dbReference type="ChEBI" id="CHEBI:78398"/>
        <note>pathogen-derived metabolite antigen</note>
    </ligand>
</feature>
<feature type="binding site" evidence="2">
    <location>
        <position position="112"/>
    </location>
    <ligand>
        <name>7-hydroxy-6-methyl-8-(1-D-ribityl)lumazine</name>
        <dbReference type="ChEBI" id="CHEBI:233481"/>
        <note>pathogen-derived metabolite antigen</note>
    </ligand>
</feature>
<feature type="binding site" evidence="2">
    <location>
        <position position="112"/>
    </location>
    <ligand>
        <name>8-(9H-purin-6-yl)-2-oxa-8-azabicyclo[3.3.1]nona-3,6-diene-4,6-dicarbaldehyde</name>
        <dbReference type="ChEBI" id="CHEBI:233180"/>
    </ligand>
</feature>
<feature type="binding site" evidence="2">
    <location>
        <position position="170"/>
    </location>
    <ligand>
        <name>5-(2-oxoethylideneamino)-6-(D-ribitylamino)uracil</name>
        <dbReference type="ChEBI" id="CHEBI:78397"/>
        <note>pathogen-derived metabolite antigen</note>
    </ligand>
</feature>
<feature type="binding site" evidence="2">
    <location>
        <position position="170"/>
    </location>
    <ligand>
        <name>5-(2-oxopropylideneamino)-6-(D-ribitylamino)uracil</name>
        <dbReference type="ChEBI" id="CHEBI:78398"/>
        <note>pathogen-derived metabolite antigen</note>
    </ligand>
</feature>
<feature type="binding site" evidence="2">
    <location>
        <position position="170"/>
    </location>
    <ligand>
        <name>7-hydroxy-6-methyl-8-(1-D-ribityl)lumazine</name>
        <dbReference type="ChEBI" id="CHEBI:233481"/>
        <note>pathogen-derived metabolite antigen</note>
    </ligand>
</feature>
<feature type="binding site" evidence="2">
    <location>
        <position position="171"/>
    </location>
    <ligand>
        <name>5-(2-oxoethylideneamino)-6-(D-ribitylamino)uracil</name>
        <dbReference type="ChEBI" id="CHEBI:78397"/>
        <note>pathogen-derived metabolite antigen</note>
    </ligand>
</feature>
<feature type="binding site" evidence="2">
    <location>
        <position position="171"/>
    </location>
    <ligand>
        <name>5-(2-oxopropylideneamino)-6-(D-ribitylamino)uracil</name>
        <dbReference type="ChEBI" id="CHEBI:78398"/>
        <note>pathogen-derived metabolite antigen</note>
    </ligand>
</feature>
<feature type="binding site" evidence="2">
    <location>
        <position position="171"/>
    </location>
    <ligand>
        <name>7-hydroxy-6-methyl-8-(1-D-ribityl)lumazine</name>
        <dbReference type="ChEBI" id="CHEBI:233481"/>
        <note>pathogen-derived metabolite antigen</note>
    </ligand>
</feature>
<feature type="glycosylation site" description="N-linked (GlcNAc...) asparagine" evidence="8">
    <location>
        <position position="103"/>
    </location>
</feature>
<feature type="disulfide bond" evidence="4 6 9">
    <location>
        <begin position="116"/>
        <end position="179"/>
    </location>
</feature>
<feature type="disulfide bond" evidence="4 6 9">
    <location>
        <begin position="218"/>
        <end position="274"/>
    </location>
</feature>
<feature type="strand" evidence="10">
    <location>
        <begin position="21"/>
        <end position="30"/>
    </location>
</feature>
<feature type="strand" evidence="10">
    <location>
        <begin position="39"/>
        <end position="46"/>
    </location>
</feature>
<feature type="strand" evidence="10">
    <location>
        <begin position="49"/>
        <end position="58"/>
    </location>
</feature>
<feature type="strand" evidence="10">
    <location>
        <begin position="63"/>
        <end position="65"/>
    </location>
</feature>
<feature type="helix" evidence="10">
    <location>
        <begin position="66"/>
        <end position="69"/>
    </location>
</feature>
<feature type="helix" evidence="10">
    <location>
        <begin position="74"/>
        <end position="101"/>
    </location>
</feature>
<feature type="strand" evidence="10">
    <location>
        <begin position="109"/>
        <end position="118"/>
    </location>
</feature>
<feature type="strand" evidence="10">
    <location>
        <begin position="120"/>
        <end position="122"/>
    </location>
</feature>
<feature type="strand" evidence="10">
    <location>
        <begin position="124"/>
        <end position="132"/>
    </location>
</feature>
<feature type="strand" evidence="10">
    <location>
        <begin position="135"/>
        <end position="141"/>
    </location>
</feature>
<feature type="turn" evidence="10">
    <location>
        <begin position="142"/>
        <end position="145"/>
    </location>
</feature>
<feature type="strand" evidence="10">
    <location>
        <begin position="146"/>
        <end position="153"/>
    </location>
</feature>
<feature type="helix" evidence="10">
    <location>
        <begin position="154"/>
        <end position="163"/>
    </location>
</feature>
<feature type="helix" evidence="10">
    <location>
        <begin position="165"/>
        <end position="176"/>
    </location>
</feature>
<feature type="helix" evidence="10">
    <location>
        <begin position="178"/>
        <end position="189"/>
    </location>
</feature>
<feature type="helix" evidence="10">
    <location>
        <begin position="191"/>
        <end position="194"/>
    </location>
</feature>
<feature type="strand" evidence="10">
    <location>
        <begin position="201"/>
        <end position="206"/>
    </location>
</feature>
<feature type="strand" evidence="10">
    <location>
        <begin position="215"/>
        <end position="226"/>
    </location>
</feature>
<feature type="strand" evidence="10">
    <location>
        <begin position="229"/>
        <end position="234"/>
    </location>
</feature>
<feature type="strand" evidence="11">
    <location>
        <begin position="241"/>
        <end position="245"/>
    </location>
</feature>
<feature type="strand" evidence="10">
    <location>
        <begin position="252"/>
        <end position="254"/>
    </location>
</feature>
<feature type="strand" evidence="10">
    <location>
        <begin position="256"/>
        <end position="263"/>
    </location>
</feature>
<feature type="strand" evidence="10">
    <location>
        <begin position="272"/>
        <end position="280"/>
    </location>
</feature>
<feature type="strand" evidence="10">
    <location>
        <begin position="282"/>
        <end position="288"/>
    </location>
</feature>
<organism>
    <name type="scientific">Bos taurus</name>
    <name type="common">Bovine</name>
    <dbReference type="NCBI Taxonomy" id="9913"/>
    <lineage>
        <taxon>Eukaryota</taxon>
        <taxon>Metazoa</taxon>
        <taxon>Chordata</taxon>
        <taxon>Craniata</taxon>
        <taxon>Vertebrata</taxon>
        <taxon>Euteleostomi</taxon>
        <taxon>Mammalia</taxon>
        <taxon>Eutheria</taxon>
        <taxon>Laurasiatheria</taxon>
        <taxon>Artiodactyla</taxon>
        <taxon>Ruminantia</taxon>
        <taxon>Pecora</taxon>
        <taxon>Bovidae</taxon>
        <taxon>Bovinae</taxon>
        <taxon>Bos</taxon>
    </lineage>
</organism>